<keyword id="KW-0028">Amino-acid biosynthesis</keyword>
<keyword id="KW-0963">Cytoplasm</keyword>
<keyword id="KW-0220">Diaminopimelate biosynthesis</keyword>
<keyword id="KW-0457">Lysine biosynthesis</keyword>
<keyword id="KW-0520">NAD</keyword>
<keyword id="KW-0521">NADP</keyword>
<keyword id="KW-0560">Oxidoreductase</keyword>
<reference key="1">
    <citation type="submission" date="2007-09" db="EMBL/GenBank/DDBJ databases">
        <title>Complete genome sequence of Rickettsia akari.</title>
        <authorList>
            <person name="Madan A."/>
            <person name="Fahey J."/>
            <person name="Helton E."/>
            <person name="Ketteman M."/>
            <person name="Madan A."/>
            <person name="Rodrigues S."/>
            <person name="Sanchez A."/>
            <person name="Whiting M."/>
            <person name="Dasch G."/>
            <person name="Eremeeva M."/>
        </authorList>
    </citation>
    <scope>NUCLEOTIDE SEQUENCE [LARGE SCALE GENOMIC DNA]</scope>
    <source>
        <strain>Hartford</strain>
    </source>
</reference>
<organism>
    <name type="scientific">Rickettsia akari (strain Hartford)</name>
    <dbReference type="NCBI Taxonomy" id="293614"/>
    <lineage>
        <taxon>Bacteria</taxon>
        <taxon>Pseudomonadati</taxon>
        <taxon>Pseudomonadota</taxon>
        <taxon>Alphaproteobacteria</taxon>
        <taxon>Rickettsiales</taxon>
        <taxon>Rickettsiaceae</taxon>
        <taxon>Rickettsieae</taxon>
        <taxon>Rickettsia</taxon>
        <taxon>spotted fever group</taxon>
    </lineage>
</organism>
<proteinExistence type="inferred from homology"/>
<evidence type="ECO:0000255" key="1">
    <source>
        <dbReference type="HAMAP-Rule" id="MF_00102"/>
    </source>
</evidence>
<evidence type="ECO:0000305" key="2"/>
<comment type="function">
    <text evidence="1">Catalyzes the conversion of 4-hydroxy-tetrahydrodipicolinate (HTPA) to tetrahydrodipicolinate.</text>
</comment>
<comment type="catalytic activity">
    <reaction evidence="1">
        <text>(S)-2,3,4,5-tetrahydrodipicolinate + NAD(+) + H2O = (2S,4S)-4-hydroxy-2,3,4,5-tetrahydrodipicolinate + NADH + H(+)</text>
        <dbReference type="Rhea" id="RHEA:35323"/>
        <dbReference type="ChEBI" id="CHEBI:15377"/>
        <dbReference type="ChEBI" id="CHEBI:15378"/>
        <dbReference type="ChEBI" id="CHEBI:16845"/>
        <dbReference type="ChEBI" id="CHEBI:57540"/>
        <dbReference type="ChEBI" id="CHEBI:57945"/>
        <dbReference type="ChEBI" id="CHEBI:67139"/>
        <dbReference type="EC" id="1.17.1.8"/>
    </reaction>
</comment>
<comment type="catalytic activity">
    <reaction evidence="1">
        <text>(S)-2,3,4,5-tetrahydrodipicolinate + NADP(+) + H2O = (2S,4S)-4-hydroxy-2,3,4,5-tetrahydrodipicolinate + NADPH + H(+)</text>
        <dbReference type="Rhea" id="RHEA:35331"/>
        <dbReference type="ChEBI" id="CHEBI:15377"/>
        <dbReference type="ChEBI" id="CHEBI:15378"/>
        <dbReference type="ChEBI" id="CHEBI:16845"/>
        <dbReference type="ChEBI" id="CHEBI:57783"/>
        <dbReference type="ChEBI" id="CHEBI:58349"/>
        <dbReference type="ChEBI" id="CHEBI:67139"/>
        <dbReference type="EC" id="1.17.1.8"/>
    </reaction>
</comment>
<comment type="pathway">
    <text evidence="1">Amino-acid biosynthesis; L-lysine biosynthesis via DAP pathway; (S)-tetrahydrodipicolinate from L-aspartate: step 4/4.</text>
</comment>
<comment type="subcellular location">
    <subcellularLocation>
        <location evidence="1">Cytoplasm</location>
    </subcellularLocation>
</comment>
<comment type="similarity">
    <text evidence="1">Belongs to the DapB family.</text>
</comment>
<comment type="caution">
    <text evidence="2">Was originally thought to be a dihydrodipicolinate reductase (DHDPR), catalyzing the conversion of dihydrodipicolinate to tetrahydrodipicolinate. However, it was shown in E.coli that the substrate of the enzymatic reaction is not dihydrodipicolinate (DHDP) but in fact (2S,4S)-4-hydroxy-2,3,4,5-tetrahydrodipicolinic acid (HTPA), the product released by the DapA-catalyzed reaction.</text>
</comment>
<dbReference type="EC" id="1.17.1.8" evidence="1"/>
<dbReference type="EMBL" id="CP000847">
    <property type="protein sequence ID" value="ABV74541.1"/>
    <property type="molecule type" value="Genomic_DNA"/>
</dbReference>
<dbReference type="RefSeq" id="WP_012013411.1">
    <property type="nucleotide sequence ID" value="NC_009881.1"/>
</dbReference>
<dbReference type="SMR" id="A8GMB6"/>
<dbReference type="STRING" id="293614.A1C_01055"/>
<dbReference type="KEGG" id="rak:A1C_01055"/>
<dbReference type="eggNOG" id="COG0289">
    <property type="taxonomic scope" value="Bacteria"/>
</dbReference>
<dbReference type="HOGENOM" id="CLU_047479_2_2_5"/>
<dbReference type="UniPathway" id="UPA00034">
    <property type="reaction ID" value="UER00018"/>
</dbReference>
<dbReference type="Proteomes" id="UP000006830">
    <property type="component" value="Chromosome"/>
</dbReference>
<dbReference type="GO" id="GO:0005737">
    <property type="term" value="C:cytoplasm"/>
    <property type="evidence" value="ECO:0007669"/>
    <property type="project" value="UniProtKB-SubCell"/>
</dbReference>
<dbReference type="GO" id="GO:0008839">
    <property type="term" value="F:4-hydroxy-tetrahydrodipicolinate reductase"/>
    <property type="evidence" value="ECO:0007669"/>
    <property type="project" value="UniProtKB-EC"/>
</dbReference>
<dbReference type="GO" id="GO:0051287">
    <property type="term" value="F:NAD binding"/>
    <property type="evidence" value="ECO:0007669"/>
    <property type="project" value="UniProtKB-UniRule"/>
</dbReference>
<dbReference type="GO" id="GO:0050661">
    <property type="term" value="F:NADP binding"/>
    <property type="evidence" value="ECO:0007669"/>
    <property type="project" value="UniProtKB-UniRule"/>
</dbReference>
<dbReference type="GO" id="GO:0016726">
    <property type="term" value="F:oxidoreductase activity, acting on CH or CH2 groups, NAD or NADP as acceptor"/>
    <property type="evidence" value="ECO:0007669"/>
    <property type="project" value="UniProtKB-UniRule"/>
</dbReference>
<dbReference type="GO" id="GO:0019877">
    <property type="term" value="P:diaminopimelate biosynthetic process"/>
    <property type="evidence" value="ECO:0007669"/>
    <property type="project" value="UniProtKB-UniRule"/>
</dbReference>
<dbReference type="GO" id="GO:0009089">
    <property type="term" value="P:lysine biosynthetic process via diaminopimelate"/>
    <property type="evidence" value="ECO:0007669"/>
    <property type="project" value="UniProtKB-UniRule"/>
</dbReference>
<dbReference type="CDD" id="cd02274">
    <property type="entry name" value="DHDPR_N"/>
    <property type="match status" value="1"/>
</dbReference>
<dbReference type="Gene3D" id="3.30.360.10">
    <property type="entry name" value="Dihydrodipicolinate Reductase, domain 2"/>
    <property type="match status" value="1"/>
</dbReference>
<dbReference type="Gene3D" id="3.40.50.720">
    <property type="entry name" value="NAD(P)-binding Rossmann-like Domain"/>
    <property type="match status" value="1"/>
</dbReference>
<dbReference type="HAMAP" id="MF_00102">
    <property type="entry name" value="DapB"/>
    <property type="match status" value="1"/>
</dbReference>
<dbReference type="InterPro" id="IPR022663">
    <property type="entry name" value="DapB_C"/>
</dbReference>
<dbReference type="InterPro" id="IPR000846">
    <property type="entry name" value="DapB_N"/>
</dbReference>
<dbReference type="InterPro" id="IPR022664">
    <property type="entry name" value="DapB_N_CS"/>
</dbReference>
<dbReference type="InterPro" id="IPR023940">
    <property type="entry name" value="DHDPR_bac"/>
</dbReference>
<dbReference type="InterPro" id="IPR036291">
    <property type="entry name" value="NAD(P)-bd_dom_sf"/>
</dbReference>
<dbReference type="NCBIfam" id="TIGR00036">
    <property type="entry name" value="dapB"/>
    <property type="match status" value="1"/>
</dbReference>
<dbReference type="PANTHER" id="PTHR20836:SF0">
    <property type="entry name" value="4-HYDROXY-TETRAHYDRODIPICOLINATE REDUCTASE 1, CHLOROPLASTIC-RELATED"/>
    <property type="match status" value="1"/>
</dbReference>
<dbReference type="PANTHER" id="PTHR20836">
    <property type="entry name" value="DIHYDRODIPICOLINATE REDUCTASE"/>
    <property type="match status" value="1"/>
</dbReference>
<dbReference type="Pfam" id="PF05173">
    <property type="entry name" value="DapB_C"/>
    <property type="match status" value="1"/>
</dbReference>
<dbReference type="Pfam" id="PF01113">
    <property type="entry name" value="DapB_N"/>
    <property type="match status" value="1"/>
</dbReference>
<dbReference type="PIRSF" id="PIRSF000161">
    <property type="entry name" value="DHPR"/>
    <property type="match status" value="1"/>
</dbReference>
<dbReference type="SUPFAM" id="SSF55347">
    <property type="entry name" value="Glyceraldehyde-3-phosphate dehydrogenase-like, C-terminal domain"/>
    <property type="match status" value="1"/>
</dbReference>
<dbReference type="SUPFAM" id="SSF51735">
    <property type="entry name" value="NAD(P)-binding Rossmann-fold domains"/>
    <property type="match status" value="1"/>
</dbReference>
<dbReference type="PROSITE" id="PS01298">
    <property type="entry name" value="DAPB"/>
    <property type="match status" value="1"/>
</dbReference>
<feature type="chain" id="PRO_1000008624" description="4-hydroxy-tetrahydrodipicolinate reductase">
    <location>
        <begin position="1"/>
        <end position="245"/>
    </location>
</feature>
<feature type="active site" description="Proton donor/acceptor" evidence="1">
    <location>
        <position position="134"/>
    </location>
</feature>
<feature type="active site" description="Proton donor" evidence="1">
    <location>
        <position position="138"/>
    </location>
</feature>
<feature type="binding site" evidence="1">
    <location>
        <begin position="8"/>
        <end position="13"/>
    </location>
    <ligand>
        <name>NAD(+)</name>
        <dbReference type="ChEBI" id="CHEBI:57540"/>
    </ligand>
</feature>
<feature type="binding site" evidence="1">
    <location>
        <begin position="78"/>
        <end position="80"/>
    </location>
    <ligand>
        <name>NAD(+)</name>
        <dbReference type="ChEBI" id="CHEBI:57540"/>
    </ligand>
</feature>
<feature type="binding site" evidence="1">
    <location>
        <begin position="102"/>
        <end position="105"/>
    </location>
    <ligand>
        <name>NAD(+)</name>
        <dbReference type="ChEBI" id="CHEBI:57540"/>
    </ligand>
</feature>
<feature type="binding site" evidence="1">
    <location>
        <position position="135"/>
    </location>
    <ligand>
        <name>(S)-2,3,4,5-tetrahydrodipicolinate</name>
        <dbReference type="ChEBI" id="CHEBI:16845"/>
    </ligand>
</feature>
<feature type="binding site" evidence="1">
    <location>
        <begin position="144"/>
        <end position="145"/>
    </location>
    <ligand>
        <name>(S)-2,3,4,5-tetrahydrodipicolinate</name>
        <dbReference type="ChEBI" id="CHEBI:16845"/>
    </ligand>
</feature>
<protein>
    <recommendedName>
        <fullName evidence="1">4-hydroxy-tetrahydrodipicolinate reductase</fullName>
        <shortName evidence="1">HTPA reductase</shortName>
        <ecNumber evidence="1">1.17.1.8</ecNumber>
    </recommendedName>
</protein>
<gene>
    <name evidence="1" type="primary">dapB</name>
    <name type="ordered locus">A1C_01055</name>
</gene>
<accession>A8GMB6</accession>
<name>DAPB_RICAH</name>
<sequence>MINIGLSGSTGKMGKTILARIDKFKDCKISAKFNSTDDLDDLNNFCKNSDVIIDFSTPEILEKLINYALKHNTKLVIGTTGLQPKHFKLLEKAAKTLPILYSANMSTGANLLSYLAKKATKILDDYDIEILETHHRNKKDSPSGTAIMLAETIAREKGLNIVFNRGNRPRSEKEIGISSLRGGNVHSIHEISLLGDDEIITLKHEALNKNSFVIGAIKSAIWLQDKSPALYSMQDIYNYSLQKQL</sequence>